<proteinExistence type="evidence at protein level"/>
<organism>
    <name type="scientific">Streptomyces coelicolor (strain ATCC BAA-471 / A3(2) / M145)</name>
    <dbReference type="NCBI Taxonomy" id="100226"/>
    <lineage>
        <taxon>Bacteria</taxon>
        <taxon>Bacillati</taxon>
        <taxon>Actinomycetota</taxon>
        <taxon>Actinomycetes</taxon>
        <taxon>Kitasatosporales</taxon>
        <taxon>Streptomycetaceae</taxon>
        <taxon>Streptomyces</taxon>
        <taxon>Streptomyces albidoflavus group</taxon>
    </lineage>
</organism>
<accession>Q9RL17</accession>
<sequence length="603" mass="66397">MAHAQELTPEALAGLRERYRRERERRVRPDGTRQYLGADAEFGFYAADPWAGESDVREPVRDRVDVAVVGGGFGGVLAGARLRQQGVARVRVVEKGGDFGGTWYWNRYPGIHCDIEAHVYLPMLDETGYVPEWKYAPGEEIRRHAMRIAETFDLYTDVLFSTAVTSLSWDDTTGEWIVETDRHDAFRATYVITATGVLSELKLPGIPGIERFKGHTFHTSRWDYAYTGGGPDGGLTGLADKRVGVVGTGATGVQVIPKLAEDAGQLHVFQRTPSSVDVRANRRTTARDVGADRAGWASERRDNFLRVVSGEAVEEDLVADRWTATAGLLEKLLPSFRRPDDLAAFEAAYEVADAARMNDIRARVDDLVTDPATADRLKPWYRYACKRPTFSDLYLQAFNRDNVTLVDTADTHGIERMNERGVVVGDTEYPLDCLVFATGFSVGVSGVHSGRLPVRGRGGVRLRDAWSARGPRTLHGLTSNGFPNLIQLGGVQSASSVNHTHVLDEHAVHGAALVAAAEAKGAVVEPTREAEDAWIATLAEHAPDHAWFHAECTPGYYNAEGRGRPNGPTAYPHGAAAFHELLRRWREESMDELLAPRARVRAC</sequence>
<comment type="function">
    <text evidence="2">Catalyzes a Baeyer-Villiger oxidation reaction, i.e. the insertion of an oxygen atom into a carbon-carbon bond adjacent to a carbonyl, which converts ketones to esters or lactones using NADPH and/or NADH as an electron donor. Thus, can convert bicyclo[3.2.0]hept-2-en-6-one into the oxidative lactone products 2-oxabicyclo[3.3.0]oct-6-en-3-one and 3-oxabicyclo[3.3.0]oct-6-en-2-one. Is also able to catalyze the sulfoxidation of methyl phenyl sulfide (thioanisole).</text>
</comment>
<comment type="cofactor">
    <cofactor evidence="1">
        <name>FAD</name>
        <dbReference type="ChEBI" id="CHEBI:57692"/>
    </cofactor>
</comment>
<comment type="similarity">
    <text evidence="4">Belongs to the FAD-binding monooxygenase family.</text>
</comment>
<keyword id="KW-0274">FAD</keyword>
<keyword id="KW-0285">Flavoprotein</keyword>
<keyword id="KW-0503">Monooxygenase</keyword>
<keyword id="KW-0521">NADP</keyword>
<keyword id="KW-0560">Oxidoreductase</keyword>
<keyword id="KW-1185">Reference proteome</keyword>
<reference key="1">
    <citation type="journal article" date="2002" name="Nature">
        <title>Complete genome sequence of the model actinomycete Streptomyces coelicolor A3(2).</title>
        <authorList>
            <person name="Bentley S.D."/>
            <person name="Chater K.F."/>
            <person name="Cerdeno-Tarraga A.-M."/>
            <person name="Challis G.L."/>
            <person name="Thomson N.R."/>
            <person name="James K.D."/>
            <person name="Harris D.E."/>
            <person name="Quail M.A."/>
            <person name="Kieser H."/>
            <person name="Harper D."/>
            <person name="Bateman A."/>
            <person name="Brown S."/>
            <person name="Chandra G."/>
            <person name="Chen C.W."/>
            <person name="Collins M."/>
            <person name="Cronin A."/>
            <person name="Fraser A."/>
            <person name="Goble A."/>
            <person name="Hidalgo J."/>
            <person name="Hornsby T."/>
            <person name="Howarth S."/>
            <person name="Huang C.-H."/>
            <person name="Kieser T."/>
            <person name="Larke L."/>
            <person name="Murphy L.D."/>
            <person name="Oliver K."/>
            <person name="O'Neil S."/>
            <person name="Rabbinowitsch E."/>
            <person name="Rajandream M.A."/>
            <person name="Rutherford K.M."/>
            <person name="Rutter S."/>
            <person name="Seeger K."/>
            <person name="Saunders D."/>
            <person name="Sharp S."/>
            <person name="Squares R."/>
            <person name="Squares S."/>
            <person name="Taylor K."/>
            <person name="Warren T."/>
            <person name="Wietzorrek A."/>
            <person name="Woodward J.R."/>
            <person name="Barrell B.G."/>
            <person name="Parkhill J."/>
            <person name="Hopwood D.A."/>
        </authorList>
    </citation>
    <scope>NUCLEOTIDE SEQUENCE [LARGE SCALE GENOMIC DNA]</scope>
    <source>
        <strain>ATCC BAA-471 / A3(2) / M145</strain>
    </source>
</reference>
<reference key="2">
    <citation type="journal article" date="2007" name="J. Microbiol. Biotechnol.">
        <title>The analysis and application of a recombinant monooxygenase library as a biocatalyst for the Baeyer-Villiger reaction.</title>
        <authorList>
            <person name="Park J."/>
            <person name="Kim D."/>
            <person name="Kim S."/>
            <person name="Kim J."/>
            <person name="Bae K."/>
            <person name="Lee C."/>
        </authorList>
    </citation>
    <scope>FUNCTION</scope>
    <scope>CATALYTIC ACTIVITY</scope>
    <source>
        <strain>ATCC BAA-471 / A3(2) / M145</strain>
    </source>
</reference>
<name>BVMO1_STRCO</name>
<dbReference type="EC" id="1.14.13.-" evidence="2"/>
<dbReference type="EMBL" id="AL939104">
    <property type="protein sequence ID" value="CAB55657.1"/>
    <property type="molecule type" value="Genomic_DNA"/>
</dbReference>
<dbReference type="RefSeq" id="NP_624628.1">
    <property type="nucleotide sequence ID" value="NC_003888.3"/>
</dbReference>
<dbReference type="RefSeq" id="WP_003978566.1">
    <property type="nucleotide sequence ID" value="NZ_VNID01000014.1"/>
</dbReference>
<dbReference type="SMR" id="Q9RL17"/>
<dbReference type="STRING" id="100226.gene:17757884"/>
<dbReference type="PaxDb" id="100226-SCO0300"/>
<dbReference type="KEGG" id="sco:SCO0300"/>
<dbReference type="PATRIC" id="fig|100226.15.peg.274"/>
<dbReference type="eggNOG" id="COG2072">
    <property type="taxonomic scope" value="Bacteria"/>
</dbReference>
<dbReference type="HOGENOM" id="CLU_006937_8_2_11"/>
<dbReference type="InParanoid" id="Q9RL17"/>
<dbReference type="OrthoDB" id="5168853at2"/>
<dbReference type="PhylomeDB" id="Q9RL17"/>
<dbReference type="Proteomes" id="UP000001973">
    <property type="component" value="Chromosome"/>
</dbReference>
<dbReference type="GO" id="GO:0050660">
    <property type="term" value="F:flavin adenine dinucleotide binding"/>
    <property type="evidence" value="ECO:0007669"/>
    <property type="project" value="InterPro"/>
</dbReference>
<dbReference type="GO" id="GO:0004499">
    <property type="term" value="F:N,N-dimethylaniline monooxygenase activity"/>
    <property type="evidence" value="ECO:0007669"/>
    <property type="project" value="InterPro"/>
</dbReference>
<dbReference type="GO" id="GO:0050661">
    <property type="term" value="F:NADP binding"/>
    <property type="evidence" value="ECO:0007669"/>
    <property type="project" value="InterPro"/>
</dbReference>
<dbReference type="GO" id="GO:0016709">
    <property type="term" value="F:oxidoreductase activity, acting on paired donors, with incorporation or reduction of molecular oxygen, NAD(P)H as one donor, and incorporation of one atom of oxygen"/>
    <property type="evidence" value="ECO:0000314"/>
    <property type="project" value="UniProtKB"/>
</dbReference>
<dbReference type="FunFam" id="3.50.50.60:FF:000314">
    <property type="entry name" value="Baeyer-Villiger monooxygenase"/>
    <property type="match status" value="1"/>
</dbReference>
<dbReference type="FunFam" id="3.50.50.60:FF:000341">
    <property type="entry name" value="Baeyer-Villiger monooxygenase"/>
    <property type="match status" value="1"/>
</dbReference>
<dbReference type="Gene3D" id="3.50.50.60">
    <property type="entry name" value="FAD/NAD(P)-binding domain"/>
    <property type="match status" value="2"/>
</dbReference>
<dbReference type="InterPro" id="IPR050775">
    <property type="entry name" value="FAD-binding_Monooxygenases"/>
</dbReference>
<dbReference type="InterPro" id="IPR036188">
    <property type="entry name" value="FAD/NAD-bd_sf"/>
</dbReference>
<dbReference type="InterPro" id="IPR020946">
    <property type="entry name" value="Flavin_mOase-like"/>
</dbReference>
<dbReference type="PANTHER" id="PTHR43098:SF2">
    <property type="entry name" value="FAD-BINDING MONOOXYGENASE AUSB-RELATED"/>
    <property type="match status" value="1"/>
</dbReference>
<dbReference type="PANTHER" id="PTHR43098">
    <property type="entry name" value="L-ORNITHINE N(5)-MONOOXYGENASE-RELATED"/>
    <property type="match status" value="1"/>
</dbReference>
<dbReference type="Pfam" id="PF00743">
    <property type="entry name" value="FMO-like"/>
    <property type="match status" value="1"/>
</dbReference>
<dbReference type="Pfam" id="PF13450">
    <property type="entry name" value="NAD_binding_8"/>
    <property type="match status" value="1"/>
</dbReference>
<dbReference type="PRINTS" id="PR00411">
    <property type="entry name" value="PNDRDTASEI"/>
</dbReference>
<dbReference type="SUPFAM" id="SSF51905">
    <property type="entry name" value="FAD/NAD(P)-binding domain"/>
    <property type="match status" value="3"/>
</dbReference>
<protein>
    <recommendedName>
        <fullName evidence="3">Baeyer-Villiger monooxygenase</fullName>
        <shortName evidence="3">BVMO</shortName>
        <ecNumber evidence="2">1.14.13.-</ecNumber>
    </recommendedName>
</protein>
<evidence type="ECO:0000250" key="1">
    <source>
        <dbReference type="UniProtKB" id="Q47PU3"/>
    </source>
</evidence>
<evidence type="ECO:0000269" key="2">
    <source>
    </source>
</evidence>
<evidence type="ECO:0000303" key="3">
    <source>
    </source>
</evidence>
<evidence type="ECO:0000305" key="4"/>
<evidence type="ECO:0000312" key="5">
    <source>
        <dbReference type="EMBL" id="CAB55657.1"/>
    </source>
</evidence>
<feature type="chain" id="PRO_0000431626" description="Baeyer-Villiger monooxygenase">
    <location>
        <begin position="1"/>
        <end position="603"/>
    </location>
</feature>
<feature type="binding site" evidence="1">
    <location>
        <position position="94"/>
    </location>
    <ligand>
        <name>FAD</name>
        <dbReference type="ChEBI" id="CHEBI:57692"/>
    </ligand>
</feature>
<feature type="binding site" evidence="1">
    <location>
        <begin position="102"/>
        <end position="105"/>
    </location>
    <ligand>
        <name>FAD</name>
        <dbReference type="ChEBI" id="CHEBI:57692"/>
    </ligand>
</feature>
<feature type="binding site" evidence="1">
    <location>
        <begin position="112"/>
        <end position="114"/>
    </location>
    <ligand>
        <name>NADP(+)</name>
        <dbReference type="ChEBI" id="CHEBI:58349"/>
    </ligand>
</feature>
<feature type="binding site" evidence="1">
    <location>
        <position position="114"/>
    </location>
    <ligand>
        <name>FAD</name>
        <dbReference type="ChEBI" id="CHEBI:57692"/>
    </ligand>
</feature>
<feature type="binding site" evidence="1">
    <location>
        <position position="120"/>
    </location>
    <ligand>
        <name>FAD</name>
        <dbReference type="ChEBI" id="CHEBI:57692"/>
    </ligand>
</feature>
<feature type="binding site" evidence="1">
    <location>
        <position position="164"/>
    </location>
    <ligand>
        <name>FAD</name>
        <dbReference type="ChEBI" id="CHEBI:57692"/>
    </ligand>
</feature>
<feature type="binding site" evidence="1">
    <location>
        <begin position="248"/>
        <end position="254"/>
    </location>
    <ligand>
        <name>NADP(+)</name>
        <dbReference type="ChEBI" id="CHEBI:58349"/>
    </ligand>
</feature>
<feature type="binding site" evidence="1">
    <location>
        <begin position="271"/>
        <end position="272"/>
    </location>
    <ligand>
        <name>NADP(+)</name>
        <dbReference type="ChEBI" id="CHEBI:58349"/>
    </ligand>
</feature>
<feature type="binding site" evidence="1">
    <location>
        <begin position="386"/>
        <end position="387"/>
    </location>
    <ligand>
        <name>NADP(+)</name>
        <dbReference type="ChEBI" id="CHEBI:58349"/>
    </ligand>
</feature>
<feature type="site" description="Transition state stabilizer" evidence="1">
    <location>
        <position position="387"/>
    </location>
</feature>
<gene>
    <name evidence="5" type="ordered locus">SCO0300</name>
</gene>